<keyword id="KW-0002">3D-structure</keyword>
<keyword id="KW-0963">Cytoplasm</keyword>
<keyword id="KW-0903">Direct protein sequencing</keyword>
<keyword id="KW-0647">Proteasome</keyword>
<keyword id="KW-1185">Reference proteome</keyword>
<reference key="1">
    <citation type="journal article" date="1991" name="FEBS Lett.">
        <title>Cloning and sequencing of the gene encoding the large (alpha-) subunit of the proteasome from Thermoplasma acidophilum.</title>
        <authorList>
            <person name="Zwickl P."/>
            <person name="Lottspeich F."/>
            <person name="Dahlmann B."/>
            <person name="Baumeister W."/>
        </authorList>
    </citation>
    <scope>NUCLEOTIDE SEQUENCE [GENOMIC DNA]</scope>
    <scope>PROTEIN SEQUENCE OF 21-28; 41-54 AND 88-93</scope>
</reference>
<reference key="2">
    <citation type="submission" date="1993-07" db="EMBL/GenBank/DDBJ databases">
        <authorList>
            <person name="Zwickl P."/>
        </authorList>
    </citation>
    <scope>SEQUENCE REVISION TO 66-69</scope>
</reference>
<reference key="3">
    <citation type="journal article" date="2000" name="Nature">
        <title>The genome sequence of the thermoacidophilic scavenger Thermoplasma acidophilum.</title>
        <authorList>
            <person name="Ruepp A."/>
            <person name="Graml W."/>
            <person name="Santos-Martinez M.-L."/>
            <person name="Koretke K.K."/>
            <person name="Volker C."/>
            <person name="Mewes H.-W."/>
            <person name="Frishman D."/>
            <person name="Stocker S."/>
            <person name="Lupas A.N."/>
            <person name="Baumeister W."/>
        </authorList>
    </citation>
    <scope>NUCLEOTIDE SEQUENCE [LARGE SCALE GENOMIC DNA]</scope>
    <source>
        <strain>ATCC 25905 / DSM 1728 / JCM 9062 / NBRC 15155 / AMRC-C165</strain>
    </source>
</reference>
<reference key="4">
    <citation type="journal article" date="1997" name="J. Biol. Chem.">
        <title>Processive degradation of proteins and other catalytic properties of the proteasome from Thermoplasma acidophilum.</title>
        <authorList>
            <person name="Akopian T.N."/>
            <person name="Kisselev A.F."/>
            <person name="Goldberg A.L."/>
        </authorList>
    </citation>
    <scope>PROTEIN SEQUENCE OF N-TERMINUS</scope>
    <scope>FUNCTION</scope>
    <scope>CATALYTIC ACTIVITY</scope>
    <scope>KINETIC PARAMETERS</scope>
</reference>
<reference key="5">
    <citation type="journal article" date="1992" name="EMBO J.">
        <title>Subunit stoichiometry and three-dimensional arrangement in proteasomes from Thermoplasma acidophilum.</title>
        <authorList>
            <person name="Puehler G."/>
            <person name="Weinkauf S."/>
            <person name="Bachmann L."/>
            <person name="Mueller S."/>
            <person name="Engel E."/>
            <person name="Hegerl R."/>
            <person name="Baumeister W."/>
        </authorList>
    </citation>
    <scope>SUBUNIT</scope>
</reference>
<reference key="6">
    <citation type="journal article" date="1998" name="J. Biol. Chem.">
        <title>Range of sizes of peptide products generated during degradation of different proteins by archaeal proteasomes.</title>
        <authorList>
            <person name="Kisselev A.F."/>
            <person name="Akopian T.N."/>
            <person name="Goldberg A.L."/>
        </authorList>
    </citation>
    <scope>CHARACTERIZATION</scope>
</reference>
<reference key="7">
    <citation type="journal article" date="2005" name="Mol. Cell">
        <title>ATP binding to PAN or the 26S ATPases causes association with the 20S proteasome, gate opening, and translocation of unfolded proteins.</title>
        <authorList>
            <person name="Smith D.M."/>
            <person name="Kafri G."/>
            <person name="Cheng Y."/>
            <person name="Ng D."/>
            <person name="Walz T."/>
            <person name="Goldberg A.L."/>
        </authorList>
    </citation>
    <scope>INTERACTION WITH PAN</scope>
    <scope>SUBUNIT</scope>
    <scope>GATED STRUCTURE</scope>
    <scope>MUTAGENESIS OF 1-MET--ILE-12</scope>
</reference>
<reference key="8">
    <citation type="journal article" date="2007" name="Mol. Cell">
        <title>Docking of the proteasomal ATPases' carboxyl termini in the 20S proteasome's alpha ring opens the gate for substrate entry.</title>
        <authorList>
            <person name="Smith D.M."/>
            <person name="Chang S.C."/>
            <person name="Park S."/>
            <person name="Finley D."/>
            <person name="Cheng Y."/>
            <person name="Goldberg A.L."/>
        </authorList>
    </citation>
    <scope>GATE OPENING MECHANISM</scope>
    <scope>ACTIVITY REGULATION</scope>
    <scope>MUTAGENESIS OF LYS-66</scope>
</reference>
<reference key="9">
    <citation type="journal article" date="1995" name="Science">
        <title>Crystal structure of the 20S proteasome from the archaeon T. acidophilum at 3.4-A resolution.</title>
        <authorList>
            <person name="Lowe J."/>
            <person name="Stock D."/>
            <person name="Jap B."/>
            <person name="Zwickl P."/>
            <person name="Baumeister W."/>
            <person name="Huber R."/>
        </authorList>
    </citation>
    <scope>X-RAY CRYSTALLOGRAPHY (3.4 ANGSTROMS) IN COMPLEX WITH BETA SUBUNIT</scope>
    <scope>SUBUNIT</scope>
</reference>
<reference key="10">
    <citation type="journal article" date="2005" name="Mol. Cell">
        <title>The 1.9 A structure of a proteasome-11S activator complex and implications for proteasome-PAN/PA700 interactions.</title>
        <authorList>
            <person name="Forster A."/>
            <person name="Masters E.I."/>
            <person name="Whitby F.G."/>
            <person name="Robinson H."/>
            <person name="Hill C.P."/>
        </authorList>
    </citation>
    <scope>X-RAY CRYSTALLOGRAPHY (1.9 ANGSTROMS) IN COMPLEX WITH BETA SUBUNIT AND T.BRUCEI PA26</scope>
</reference>
<reference key="11">
    <citation type="journal article" date="2008" name="Mol. Cell">
        <title>Mechanism of gate opening in the 20S proteasome by the proteasomal ATPases.</title>
        <authorList>
            <person name="Rabl J."/>
            <person name="Smith D.M."/>
            <person name="Yu Y."/>
            <person name="Chang S.C."/>
            <person name="Goldberg A.L."/>
            <person name="Cheng Y."/>
        </authorList>
    </citation>
    <scope>STRUCTURE BY ELECTRON MICROSCOPY (6.8 ANGSTROMS) OF THE OPEN-GATE AND CLOSED-GATE CONFORMATIONS</scope>
    <scope>GATE OPENING MECHANISM</scope>
    <scope>MUTAGENESIS OF LEU-81 AND VAL-82</scope>
</reference>
<reference key="12">
    <citation type="journal article" date="2010" name="EMBO J.">
        <title>Interactions of PAN's C-termini with archaeal 20S proteasome and implications for the eukaryotic proteasome-ATPase interactions.</title>
        <authorList>
            <person name="Yu Y."/>
            <person name="Smith D.M."/>
            <person name="Kim H.M."/>
            <person name="Rodriguez V."/>
            <person name="Goldberg A.L."/>
            <person name="Cheng Y."/>
        </authorList>
    </citation>
    <scope>X-RAY CRYSTALLOGRAPHY (4.0 ANGSTROMS) IN COMPLEX WITH THE BETA SUBUNIT AND THE C-TERMINUS OF PAN FROM M.JANNASCHII</scope>
</reference>
<reference key="13">
    <citation type="journal article" date="2010" name="J. Biol. Chem.">
        <title>Structural models for interactions between the 20S proteasome and its PAN/19S activators.</title>
        <authorList>
            <person name="Stadtmueller B.M."/>
            <person name="Ferrell K."/>
            <person name="Whitby F.G."/>
            <person name="Heroux A."/>
            <person name="Robinson H."/>
            <person name="Myszka D.G."/>
            <person name="Hill C.P."/>
        </authorList>
    </citation>
    <scope>X-RAY CRYSTALLOGRAPHY (2.9 ANGSTROMS) IN COMPLEX WITH BETA SUBUNIT AND CHIMERIC PA26 CONSTRUCTS</scope>
</reference>
<reference key="14">
    <citation type="journal article" date="2010" name="Science">
        <title>Dynamic regulation of archaeal proteasome gate opening as studied by TROSY NMR.</title>
        <authorList>
            <person name="Religa T.L."/>
            <person name="Sprangers R."/>
            <person name="Kay L.E."/>
        </authorList>
    </citation>
    <scope>STRUCTURE BY NMR</scope>
    <scope>ACTIVITY REGULATION</scope>
</reference>
<dbReference type="EMBL" id="X59507">
    <property type="protein sequence ID" value="CAA42094.1"/>
    <property type="molecule type" value="Genomic_DNA"/>
</dbReference>
<dbReference type="EMBL" id="AL445067">
    <property type="protein sequence ID" value="CAC12411.1"/>
    <property type="molecule type" value="Genomic_DNA"/>
</dbReference>
<dbReference type="PIR" id="S55350">
    <property type="entry name" value="S55350"/>
</dbReference>
<dbReference type="RefSeq" id="WP_010901695.1">
    <property type="nucleotide sequence ID" value="NC_002578.1"/>
</dbReference>
<dbReference type="PDB" id="1PMA">
    <property type="method" value="X-ray"/>
    <property type="resolution" value="3.40 A"/>
    <property type="chains" value="A/C/D/E/F/G/H/I/J/K/L/M/N/O=1-233"/>
</dbReference>
<dbReference type="PDB" id="1YA7">
    <property type="method" value="X-ray"/>
    <property type="resolution" value="2.30 A"/>
    <property type="chains" value="A/B/C/D/E/F/G=1-233"/>
</dbReference>
<dbReference type="PDB" id="1YAR">
    <property type="method" value="X-ray"/>
    <property type="resolution" value="1.90 A"/>
    <property type="chains" value="A/B/C/D/E/F/G=1-233"/>
</dbReference>
<dbReference type="PDB" id="1YAU">
    <property type="method" value="X-ray"/>
    <property type="resolution" value="2.40 A"/>
    <property type="chains" value="A/B/C/D/E/F/G=1-233"/>
</dbReference>
<dbReference type="PDB" id="2KU1">
    <property type="method" value="NMR"/>
    <property type="chains" value="A/B/C/D/E/F/G=1-233"/>
</dbReference>
<dbReference type="PDB" id="2KU2">
    <property type="method" value="NMR"/>
    <property type="chains" value="A/B/C/D/E/F/G=1-233"/>
</dbReference>
<dbReference type="PDB" id="3C91">
    <property type="method" value="EM"/>
    <property type="resolution" value="6.80 A"/>
    <property type="chains" value="A/B/C/D/E/F/G/O/P/Q/R/S/T/U=1-233"/>
</dbReference>
<dbReference type="PDB" id="3C92">
    <property type="method" value="EM"/>
    <property type="resolution" value="6.80 A"/>
    <property type="chains" value="A/B/C/D/E/F/G/O/P/Q/R/S/T/U=1-233"/>
</dbReference>
<dbReference type="PDB" id="3IPM">
    <property type="method" value="X-ray"/>
    <property type="resolution" value="4.00 A"/>
    <property type="chains" value="A/B/C/D/E/F/G=1-233"/>
</dbReference>
<dbReference type="PDB" id="3J9I">
    <property type="method" value="EM"/>
    <property type="resolution" value="3.30 A"/>
    <property type="chains" value="A/B/C/D/E/F/G/O/P/Q/R/S/T/U=10-233"/>
</dbReference>
<dbReference type="PDB" id="3JRM">
    <property type="method" value="X-ray"/>
    <property type="resolution" value="2.90 A"/>
    <property type="chains" value="A/B/C/D/E/F/G=7-233"/>
</dbReference>
<dbReference type="PDB" id="3JSE">
    <property type="method" value="X-ray"/>
    <property type="resolution" value="2.90 A"/>
    <property type="chains" value="A/B/C/D/E/F/G=7-233"/>
</dbReference>
<dbReference type="PDB" id="3JTL">
    <property type="method" value="X-ray"/>
    <property type="resolution" value="3.20 A"/>
    <property type="chains" value="A/B/C/D/E/F/G=7-233"/>
</dbReference>
<dbReference type="PDB" id="5VY3">
    <property type="method" value="EM"/>
    <property type="resolution" value="3.10 A"/>
    <property type="chains" value="0/A/C/E/G/I/K/M/O/Q/S/U/W/Y=10-233"/>
</dbReference>
<dbReference type="PDB" id="5VY4">
    <property type="method" value="EM"/>
    <property type="resolution" value="3.30 A"/>
    <property type="chains" value="0/A/C/E/G/I/K/M/O/Q/S/U/W/Y=10-233"/>
</dbReference>
<dbReference type="PDB" id="6BDF">
    <property type="method" value="EM"/>
    <property type="resolution" value="2.80 A"/>
    <property type="chains" value="0/A/C/E/G/I/K/M/O/Q/S/U/W/Y=1-233"/>
</dbReference>
<dbReference type="PDB" id="6UTF">
    <property type="method" value="EM"/>
    <property type="resolution" value="3.40 A"/>
    <property type="chains" value="A/B/C/D/E/F/G/O/P/Q/R/S/T/U=7-233"/>
</dbReference>
<dbReference type="PDB" id="6UTH">
    <property type="method" value="EM"/>
    <property type="resolution" value="3.40 A"/>
    <property type="chains" value="A/B/C/D/E/F/G/O/P/Q/R/S/T/U=7-233"/>
</dbReference>
<dbReference type="PDB" id="6UTI">
    <property type="method" value="EM"/>
    <property type="resolution" value="3.40 A"/>
    <property type="chains" value="A/B/C/D/E/F/G/O/P/Q/R/S/T/U=7-233"/>
</dbReference>
<dbReference type="PDB" id="8F66">
    <property type="method" value="EM"/>
    <property type="resolution" value="2.28 A"/>
    <property type="chains" value="A/B/C/D/E/F/G/O/P/Q/R/S/T/U=1-233"/>
</dbReference>
<dbReference type="PDB" id="8F6A">
    <property type="method" value="EM"/>
    <property type="resolution" value="2.06 A"/>
    <property type="chains" value="A/B/C/D/E/F/G/O/P/Q/R/S/T/U=1-233"/>
</dbReference>
<dbReference type="PDB" id="8F7K">
    <property type="method" value="EM"/>
    <property type="resolution" value="1.94 A"/>
    <property type="chains" value="A/B/C/D/E/F/G/O/P/Q/R/S/T/U=4-233"/>
</dbReference>
<dbReference type="PDB" id="9BUZ">
    <property type="method" value="EM"/>
    <property type="resolution" value="2.38 A"/>
    <property type="chains" value="A/B/C/D/E/F/G/O/P/Q/R/S/T/U=1-233"/>
</dbReference>
<dbReference type="PDBsum" id="1PMA"/>
<dbReference type="PDBsum" id="1YA7"/>
<dbReference type="PDBsum" id="1YAR"/>
<dbReference type="PDBsum" id="1YAU"/>
<dbReference type="PDBsum" id="2KU1"/>
<dbReference type="PDBsum" id="2KU2"/>
<dbReference type="PDBsum" id="3C91"/>
<dbReference type="PDBsum" id="3C92"/>
<dbReference type="PDBsum" id="3IPM"/>
<dbReference type="PDBsum" id="3J9I"/>
<dbReference type="PDBsum" id="3JRM"/>
<dbReference type="PDBsum" id="3JSE"/>
<dbReference type="PDBsum" id="3JTL"/>
<dbReference type="PDBsum" id="5VY3"/>
<dbReference type="PDBsum" id="5VY4"/>
<dbReference type="PDBsum" id="6BDF"/>
<dbReference type="PDBsum" id="6UTF"/>
<dbReference type="PDBsum" id="6UTH"/>
<dbReference type="PDBsum" id="6UTI"/>
<dbReference type="PDBsum" id="8F66"/>
<dbReference type="PDBsum" id="8F6A"/>
<dbReference type="PDBsum" id="8F7K"/>
<dbReference type="PDBsum" id="9BUZ"/>
<dbReference type="BMRB" id="P25156"/>
<dbReference type="EMDB" id="EMD-20877"/>
<dbReference type="EMDB" id="EMD-20878"/>
<dbReference type="EMDB" id="EMD-20879"/>
<dbReference type="EMDB" id="EMD-20880"/>
<dbReference type="EMDB" id="EMD-20881"/>
<dbReference type="EMDB" id="EMD-28876"/>
<dbReference type="EMDB" id="EMD-28878"/>
<dbReference type="EMDB" id="EMD-28906"/>
<dbReference type="EMDB" id="EMD-44926"/>
<dbReference type="EMDB" id="EMD-5623"/>
<dbReference type="EMDB" id="EMD-5923"/>
<dbReference type="EMDB" id="EMD-5924"/>
<dbReference type="EMDB" id="EMD-8741"/>
<dbReference type="EMDB" id="EMD-8742"/>
<dbReference type="SMR" id="P25156"/>
<dbReference type="FunCoup" id="P25156">
    <property type="interactions" value="153"/>
</dbReference>
<dbReference type="STRING" id="273075.gene:9572512"/>
<dbReference type="MEROPS" id="T01.970"/>
<dbReference type="PaxDb" id="273075-Ta1288"/>
<dbReference type="EnsemblBacteria" id="CAC12411">
    <property type="protein sequence ID" value="CAC12411"/>
    <property type="gene ID" value="CAC12411"/>
</dbReference>
<dbReference type="KEGG" id="tac:Ta1288"/>
<dbReference type="eggNOG" id="arCOG00971">
    <property type="taxonomic scope" value="Archaea"/>
</dbReference>
<dbReference type="HOGENOM" id="CLU_035750_4_1_2"/>
<dbReference type="InParanoid" id="P25156"/>
<dbReference type="OrthoDB" id="9421at2157"/>
<dbReference type="BRENDA" id="3.4.25.1">
    <property type="organism ID" value="6324"/>
</dbReference>
<dbReference type="EvolutionaryTrace" id="P25156"/>
<dbReference type="Proteomes" id="UP000001024">
    <property type="component" value="Chromosome"/>
</dbReference>
<dbReference type="GO" id="GO:0005737">
    <property type="term" value="C:cytoplasm"/>
    <property type="evidence" value="ECO:0007669"/>
    <property type="project" value="UniProtKB-SubCell"/>
</dbReference>
<dbReference type="GO" id="GO:0019773">
    <property type="term" value="C:proteasome core complex, alpha-subunit complex"/>
    <property type="evidence" value="ECO:0000314"/>
    <property type="project" value="UniProtKB"/>
</dbReference>
<dbReference type="GO" id="GO:0004175">
    <property type="term" value="F:endopeptidase activity"/>
    <property type="evidence" value="ECO:0000314"/>
    <property type="project" value="UniProtKB"/>
</dbReference>
<dbReference type="GO" id="GO:0004298">
    <property type="term" value="F:threonine-type endopeptidase activity"/>
    <property type="evidence" value="ECO:0007669"/>
    <property type="project" value="InterPro"/>
</dbReference>
<dbReference type="GO" id="GO:0010498">
    <property type="term" value="P:proteasomal protein catabolic process"/>
    <property type="evidence" value="ECO:0000314"/>
    <property type="project" value="UniProtKB"/>
</dbReference>
<dbReference type="GO" id="GO:0006511">
    <property type="term" value="P:ubiquitin-dependent protein catabolic process"/>
    <property type="evidence" value="ECO:0007669"/>
    <property type="project" value="InterPro"/>
</dbReference>
<dbReference type="CDD" id="cd03756">
    <property type="entry name" value="proteasome_alpha_archeal"/>
    <property type="match status" value="1"/>
</dbReference>
<dbReference type="FunFam" id="3.60.20.10:FF:000004">
    <property type="entry name" value="Proteasome subunit alpha type-4"/>
    <property type="match status" value="1"/>
</dbReference>
<dbReference type="Gene3D" id="3.60.20.10">
    <property type="entry name" value="Glutamine Phosphoribosylpyrophosphate, subunit 1, domain 1"/>
    <property type="match status" value="1"/>
</dbReference>
<dbReference type="HAMAP" id="MF_00289_A">
    <property type="entry name" value="Proteasome_A_A"/>
    <property type="match status" value="1"/>
</dbReference>
<dbReference type="InterPro" id="IPR029055">
    <property type="entry name" value="Ntn_hydrolases_N"/>
</dbReference>
<dbReference type="InterPro" id="IPR050115">
    <property type="entry name" value="Proteasome_alpha"/>
</dbReference>
<dbReference type="InterPro" id="IPR023332">
    <property type="entry name" value="Proteasome_alpha-type"/>
</dbReference>
<dbReference type="InterPro" id="IPR019982">
    <property type="entry name" value="Proteasome_asu_arc"/>
</dbReference>
<dbReference type="InterPro" id="IPR000426">
    <property type="entry name" value="Proteasome_asu_N"/>
</dbReference>
<dbReference type="InterPro" id="IPR001353">
    <property type="entry name" value="Proteasome_sua/b"/>
</dbReference>
<dbReference type="NCBIfam" id="TIGR03633">
    <property type="entry name" value="arc_protsome_A"/>
    <property type="match status" value="1"/>
</dbReference>
<dbReference type="NCBIfam" id="NF003075">
    <property type="entry name" value="PRK03996.1"/>
    <property type="match status" value="1"/>
</dbReference>
<dbReference type="PANTHER" id="PTHR11599">
    <property type="entry name" value="PROTEASOME SUBUNIT ALPHA/BETA"/>
    <property type="match status" value="1"/>
</dbReference>
<dbReference type="Pfam" id="PF00227">
    <property type="entry name" value="Proteasome"/>
    <property type="match status" value="1"/>
</dbReference>
<dbReference type="Pfam" id="PF10584">
    <property type="entry name" value="Proteasome_A_N"/>
    <property type="match status" value="1"/>
</dbReference>
<dbReference type="SMART" id="SM00948">
    <property type="entry name" value="Proteasome_A_N"/>
    <property type="match status" value="1"/>
</dbReference>
<dbReference type="SUPFAM" id="SSF56235">
    <property type="entry name" value="N-terminal nucleophile aminohydrolases (Ntn hydrolases)"/>
    <property type="match status" value="1"/>
</dbReference>
<dbReference type="PROSITE" id="PS00388">
    <property type="entry name" value="PROTEASOME_ALPHA_1"/>
    <property type="match status" value="1"/>
</dbReference>
<dbReference type="PROSITE" id="PS51475">
    <property type="entry name" value="PROTEASOME_ALPHA_2"/>
    <property type="match status" value="1"/>
</dbReference>
<name>PSA_THEAC</name>
<organism>
    <name type="scientific">Thermoplasma acidophilum (strain ATCC 25905 / DSM 1728 / JCM 9062 / NBRC 15155 / AMRC-C165)</name>
    <dbReference type="NCBI Taxonomy" id="273075"/>
    <lineage>
        <taxon>Archaea</taxon>
        <taxon>Methanobacteriati</taxon>
        <taxon>Thermoplasmatota</taxon>
        <taxon>Thermoplasmata</taxon>
        <taxon>Thermoplasmatales</taxon>
        <taxon>Thermoplasmataceae</taxon>
        <taxon>Thermoplasma</taxon>
    </lineage>
</organism>
<protein>
    <recommendedName>
        <fullName evidence="1">Proteasome subunit alpha</fullName>
    </recommendedName>
    <alternativeName>
        <fullName evidence="1">20S proteasome alpha subunit</fullName>
    </alternativeName>
    <alternativeName>
        <fullName evidence="1">Proteasome core protein PsmA</fullName>
    </alternativeName>
</protein>
<accession>P25156</accession>
<comment type="function">
    <text evidence="1 11">Component of the proteasome core, a large protease complex with broad specificity involved in protein degradation. The T.acidophilum proteasome is able to cleave oligopeptides after Tyr, Leu, Phe, and to a lesser extent after Glu and Arg. Thus, displays chymotrypsin-like activity and low level of caspase-like and trypsin-like activities.</text>
</comment>
<comment type="activity regulation">
    <text evidence="1 5 9">The formation of the proteasomal ATPase PAN-20S proteasome complex, via the docking of the C-termini of PAN into the intersubunit pockets in the alpha-rings, triggers opening of the gate for substrate entry. Interconversion between the open-gate and close-gate conformations leads to a dynamic regulation of the 20S proteasome proteolysis activity.</text>
</comment>
<comment type="biophysicochemical properties">
    <kinetics>
        <KM evidence="11">39 uM for Suc-LLVY-Amc (at 55 degrees Celsius)</KM>
        <Vmax evidence="11">28.0 nmol/min/mg enzyme with Suc-LLVY-Amc as substrate (at 55 degrees Celsius)</Vmax>
    </kinetics>
</comment>
<comment type="subunit">
    <text evidence="1 2 3 4 7 8 10">The 20S proteasome core is composed of 14 alpha and 14 beta subunits that assemble into four stacked heptameric rings, resulting in a barrel-shaped structure. The two inner rings, each composed of seven catalytic beta subunits, are sandwiched by two outer rings, each composed of seven alpha subunits. The catalytic chamber with the active sites is on the inside of the barrel. Has a gated structure, the ends of the cylinder being occluded by the N-termini of the alpha-subunits. Is capped at one or both ends by the proteasome regulatory ATPase, PAN.</text>
</comment>
<comment type="subcellular location">
    <subcellularLocation>
        <location evidence="1">Cytoplasm</location>
    </subcellularLocation>
</comment>
<comment type="PTM">
    <text>The N-terminus is blocked.</text>
</comment>
<comment type="miscellaneous">
    <text>The configuration of the closed gate contains an opening large enough to allow rapid entry of tetrapeptides but able to impede the entry of proteins and longer peptides.</text>
</comment>
<comment type="similarity">
    <text evidence="1">Belongs to the peptidase T1A family.</text>
</comment>
<feature type="chain" id="PRO_0000124189" description="Proteasome subunit alpha">
    <location>
        <begin position="1"/>
        <end position="233"/>
    </location>
</feature>
<feature type="mutagenesis site" description="Markedly increases peptidolytic activity. Designated open-gate mutant." evidence="4">
    <location>
        <begin position="1"/>
        <end position="12"/>
    </location>
</feature>
<feature type="mutagenesis site" description="Prevents PAN to associate with the proteasome and stimulate gate opening." evidence="5">
    <original>K</original>
    <variation>A</variation>
    <location>
        <position position="66"/>
    </location>
</feature>
<feature type="mutagenesis site" description="Prevents PAN to stimulate gate opening." evidence="6">
    <original>L</original>
    <variation>A</variation>
    <variation>E</variation>
    <variation>G</variation>
    <location>
        <position position="81"/>
    </location>
</feature>
<feature type="mutagenesis site" description="No effect on PAN's ability to stimulate gate opening." evidence="6">
    <original>V</original>
    <variation>A</variation>
    <location>
        <position position="82"/>
    </location>
</feature>
<feature type="mutagenesis site" description="Prevents PAN to stimulate gate opening." evidence="6">
    <original>V</original>
    <variation>D</variation>
    <variation>G</variation>
    <location>
        <position position="82"/>
    </location>
</feature>
<feature type="strand" evidence="16">
    <location>
        <begin position="13"/>
        <end position="15"/>
    </location>
</feature>
<feature type="strand" evidence="18">
    <location>
        <begin position="17"/>
        <end position="19"/>
    </location>
</feature>
<feature type="helix" evidence="14">
    <location>
        <begin position="22"/>
        <end position="31"/>
    </location>
</feature>
<feature type="strand" evidence="14">
    <location>
        <begin position="37"/>
        <end position="42"/>
    </location>
</feature>
<feature type="strand" evidence="14">
    <location>
        <begin position="45"/>
        <end position="50"/>
    </location>
</feature>
<feature type="strand" evidence="13">
    <location>
        <begin position="57"/>
        <end position="59"/>
    </location>
</feature>
<feature type="strand" evidence="15">
    <location>
        <begin position="61"/>
        <end position="63"/>
    </location>
</feature>
<feature type="strand" evidence="14">
    <location>
        <begin position="66"/>
        <end position="71"/>
    </location>
</feature>
<feature type="strand" evidence="14">
    <location>
        <begin position="74"/>
        <end position="81"/>
    </location>
</feature>
<feature type="helix" evidence="14">
    <location>
        <begin position="82"/>
        <end position="103"/>
    </location>
</feature>
<feature type="helix" evidence="14">
    <location>
        <begin position="109"/>
        <end position="122"/>
    </location>
</feature>
<feature type="turn" evidence="14">
    <location>
        <begin position="123"/>
        <end position="125"/>
    </location>
</feature>
<feature type="strand" evidence="15">
    <location>
        <begin position="126"/>
        <end position="129"/>
    </location>
</feature>
<feature type="strand" evidence="14">
    <location>
        <begin position="134"/>
        <end position="141"/>
    </location>
</feature>
<feature type="strand" evidence="14">
    <location>
        <begin position="146"/>
        <end position="151"/>
    </location>
</feature>
<feature type="turn" evidence="17">
    <location>
        <begin position="153"/>
        <end position="155"/>
    </location>
</feature>
<feature type="strand" evidence="14">
    <location>
        <begin position="157"/>
        <end position="166"/>
    </location>
</feature>
<feature type="helix" evidence="14">
    <location>
        <begin position="169"/>
        <end position="179"/>
    </location>
</feature>
<feature type="helix" evidence="14">
    <location>
        <begin position="186"/>
        <end position="199"/>
    </location>
</feature>
<feature type="helix" evidence="12">
    <location>
        <begin position="202"/>
        <end position="204"/>
    </location>
</feature>
<feature type="strand" evidence="14">
    <location>
        <begin position="211"/>
        <end position="216"/>
    </location>
</feature>
<feature type="strand" evidence="13">
    <location>
        <begin position="222"/>
        <end position="224"/>
    </location>
</feature>
<feature type="helix" evidence="14">
    <location>
        <begin position="226"/>
        <end position="230"/>
    </location>
</feature>
<sequence length="233" mass="25799">MQQGQMAYDRAITVFSPDGRLFQVEYAREAVKKGSTALGMKFANGVLLISDKKVRSRLIEQNSIEKIQLIDDYVAAVTSGLVADARVLVDFARISAQQEKVTYGSLVNIENLVKRVADQMQQYTQYGGVRPYGVSLIFAGIDQIGPRLFDCDPAGTINEYKATAIGSGKDAVVSFLEREYKENLPEKEAVTLGIKALKSSLEEGEELKAPEIASITVGNKYRIYDQEEVKKFL</sequence>
<evidence type="ECO:0000255" key="1">
    <source>
        <dbReference type="HAMAP-Rule" id="MF_00289"/>
    </source>
</evidence>
<evidence type="ECO:0000269" key="2">
    <source>
    </source>
</evidence>
<evidence type="ECO:0000269" key="3">
    <source>
    </source>
</evidence>
<evidence type="ECO:0000269" key="4">
    <source>
    </source>
</evidence>
<evidence type="ECO:0000269" key="5">
    <source>
    </source>
</evidence>
<evidence type="ECO:0000269" key="6">
    <source>
    </source>
</evidence>
<evidence type="ECO:0000269" key="7">
    <source>
    </source>
</evidence>
<evidence type="ECO:0000269" key="8">
    <source>
    </source>
</evidence>
<evidence type="ECO:0000269" key="9">
    <source>
    </source>
</evidence>
<evidence type="ECO:0000269" key="10">
    <source>
    </source>
</evidence>
<evidence type="ECO:0000269" key="11">
    <source>
    </source>
</evidence>
<evidence type="ECO:0007829" key="12">
    <source>
        <dbReference type="PDB" id="1PMA"/>
    </source>
</evidence>
<evidence type="ECO:0007829" key="13">
    <source>
        <dbReference type="PDB" id="1YA7"/>
    </source>
</evidence>
<evidence type="ECO:0007829" key="14">
    <source>
        <dbReference type="PDB" id="1YAR"/>
    </source>
</evidence>
<evidence type="ECO:0007829" key="15">
    <source>
        <dbReference type="PDB" id="1YAU"/>
    </source>
</evidence>
<evidence type="ECO:0007829" key="16">
    <source>
        <dbReference type="PDB" id="3J9I"/>
    </source>
</evidence>
<evidence type="ECO:0007829" key="17">
    <source>
        <dbReference type="PDB" id="5VY3"/>
    </source>
</evidence>
<evidence type="ECO:0007829" key="18">
    <source>
        <dbReference type="PDB" id="6UTI"/>
    </source>
</evidence>
<proteinExistence type="evidence at protein level"/>
<gene>
    <name evidence="1" type="primary">psmA</name>
    <name type="ordered locus">Ta1288</name>
</gene>